<feature type="chain" id="PRO_1000143420" description="ATP synthase subunit alpha">
    <location>
        <begin position="1"/>
        <end position="513"/>
    </location>
</feature>
<feature type="binding site" evidence="1">
    <location>
        <begin position="169"/>
        <end position="176"/>
    </location>
    <ligand>
        <name>ATP</name>
        <dbReference type="ChEBI" id="CHEBI:30616"/>
    </ligand>
</feature>
<feature type="site" description="Required for activity" evidence="1">
    <location>
        <position position="373"/>
    </location>
</feature>
<dbReference type="EC" id="7.1.2.2" evidence="1"/>
<dbReference type="EMBL" id="CP001010">
    <property type="protein sequence ID" value="ACB43350.1"/>
    <property type="molecule type" value="Genomic_DNA"/>
</dbReference>
<dbReference type="SMR" id="B1XSD2"/>
<dbReference type="STRING" id="452638.Pnec_0020"/>
<dbReference type="KEGG" id="pne:Pnec_0020"/>
<dbReference type="eggNOG" id="COG0056">
    <property type="taxonomic scope" value="Bacteria"/>
</dbReference>
<dbReference type="HOGENOM" id="CLU_010091_2_1_4"/>
<dbReference type="OrthoDB" id="9803053at2"/>
<dbReference type="GO" id="GO:0005886">
    <property type="term" value="C:plasma membrane"/>
    <property type="evidence" value="ECO:0007669"/>
    <property type="project" value="UniProtKB-SubCell"/>
</dbReference>
<dbReference type="GO" id="GO:0045259">
    <property type="term" value="C:proton-transporting ATP synthase complex"/>
    <property type="evidence" value="ECO:0007669"/>
    <property type="project" value="UniProtKB-KW"/>
</dbReference>
<dbReference type="GO" id="GO:0043531">
    <property type="term" value="F:ADP binding"/>
    <property type="evidence" value="ECO:0007669"/>
    <property type="project" value="TreeGrafter"/>
</dbReference>
<dbReference type="GO" id="GO:0005524">
    <property type="term" value="F:ATP binding"/>
    <property type="evidence" value="ECO:0007669"/>
    <property type="project" value="UniProtKB-UniRule"/>
</dbReference>
<dbReference type="GO" id="GO:0046933">
    <property type="term" value="F:proton-transporting ATP synthase activity, rotational mechanism"/>
    <property type="evidence" value="ECO:0007669"/>
    <property type="project" value="UniProtKB-UniRule"/>
</dbReference>
<dbReference type="CDD" id="cd18113">
    <property type="entry name" value="ATP-synt_F1_alpha_C"/>
    <property type="match status" value="1"/>
</dbReference>
<dbReference type="CDD" id="cd18116">
    <property type="entry name" value="ATP-synt_F1_alpha_N"/>
    <property type="match status" value="1"/>
</dbReference>
<dbReference type="CDD" id="cd01132">
    <property type="entry name" value="F1-ATPase_alpha_CD"/>
    <property type="match status" value="1"/>
</dbReference>
<dbReference type="FunFam" id="1.20.150.20:FF:000001">
    <property type="entry name" value="ATP synthase subunit alpha"/>
    <property type="match status" value="1"/>
</dbReference>
<dbReference type="FunFam" id="2.40.30.20:FF:000001">
    <property type="entry name" value="ATP synthase subunit alpha"/>
    <property type="match status" value="1"/>
</dbReference>
<dbReference type="FunFam" id="3.40.50.300:FF:000002">
    <property type="entry name" value="ATP synthase subunit alpha"/>
    <property type="match status" value="1"/>
</dbReference>
<dbReference type="Gene3D" id="2.40.30.20">
    <property type="match status" value="1"/>
</dbReference>
<dbReference type="Gene3D" id="1.20.150.20">
    <property type="entry name" value="ATP synthase alpha/beta chain, C-terminal domain"/>
    <property type="match status" value="1"/>
</dbReference>
<dbReference type="Gene3D" id="3.40.50.300">
    <property type="entry name" value="P-loop containing nucleotide triphosphate hydrolases"/>
    <property type="match status" value="1"/>
</dbReference>
<dbReference type="HAMAP" id="MF_01346">
    <property type="entry name" value="ATP_synth_alpha_bact"/>
    <property type="match status" value="1"/>
</dbReference>
<dbReference type="InterPro" id="IPR023366">
    <property type="entry name" value="ATP_synth_asu-like_sf"/>
</dbReference>
<dbReference type="InterPro" id="IPR000793">
    <property type="entry name" value="ATP_synth_asu_C"/>
</dbReference>
<dbReference type="InterPro" id="IPR038376">
    <property type="entry name" value="ATP_synth_asu_C_sf"/>
</dbReference>
<dbReference type="InterPro" id="IPR033732">
    <property type="entry name" value="ATP_synth_F1_a_nt-bd_dom"/>
</dbReference>
<dbReference type="InterPro" id="IPR005294">
    <property type="entry name" value="ATP_synth_F1_asu"/>
</dbReference>
<dbReference type="InterPro" id="IPR020003">
    <property type="entry name" value="ATPase_a/bsu_AS"/>
</dbReference>
<dbReference type="InterPro" id="IPR004100">
    <property type="entry name" value="ATPase_F1/V1/A1_a/bsu_N"/>
</dbReference>
<dbReference type="InterPro" id="IPR036121">
    <property type="entry name" value="ATPase_F1/V1/A1_a/bsu_N_sf"/>
</dbReference>
<dbReference type="InterPro" id="IPR000194">
    <property type="entry name" value="ATPase_F1/V1/A1_a/bsu_nucl-bd"/>
</dbReference>
<dbReference type="InterPro" id="IPR027417">
    <property type="entry name" value="P-loop_NTPase"/>
</dbReference>
<dbReference type="NCBIfam" id="TIGR00962">
    <property type="entry name" value="atpA"/>
    <property type="match status" value="1"/>
</dbReference>
<dbReference type="NCBIfam" id="NF009884">
    <property type="entry name" value="PRK13343.1"/>
    <property type="match status" value="1"/>
</dbReference>
<dbReference type="PANTHER" id="PTHR48082">
    <property type="entry name" value="ATP SYNTHASE SUBUNIT ALPHA, MITOCHONDRIAL"/>
    <property type="match status" value="1"/>
</dbReference>
<dbReference type="PANTHER" id="PTHR48082:SF2">
    <property type="entry name" value="ATP SYNTHASE SUBUNIT ALPHA, MITOCHONDRIAL"/>
    <property type="match status" value="1"/>
</dbReference>
<dbReference type="Pfam" id="PF00006">
    <property type="entry name" value="ATP-synt_ab"/>
    <property type="match status" value="1"/>
</dbReference>
<dbReference type="Pfam" id="PF00306">
    <property type="entry name" value="ATP-synt_ab_C"/>
    <property type="match status" value="1"/>
</dbReference>
<dbReference type="Pfam" id="PF02874">
    <property type="entry name" value="ATP-synt_ab_N"/>
    <property type="match status" value="1"/>
</dbReference>
<dbReference type="PIRSF" id="PIRSF039088">
    <property type="entry name" value="F_ATPase_subunit_alpha"/>
    <property type="match status" value="1"/>
</dbReference>
<dbReference type="SUPFAM" id="SSF47917">
    <property type="entry name" value="C-terminal domain of alpha and beta subunits of F1 ATP synthase"/>
    <property type="match status" value="1"/>
</dbReference>
<dbReference type="SUPFAM" id="SSF50615">
    <property type="entry name" value="N-terminal domain of alpha and beta subunits of F1 ATP synthase"/>
    <property type="match status" value="1"/>
</dbReference>
<dbReference type="SUPFAM" id="SSF52540">
    <property type="entry name" value="P-loop containing nucleoside triphosphate hydrolases"/>
    <property type="match status" value="1"/>
</dbReference>
<dbReference type="PROSITE" id="PS00152">
    <property type="entry name" value="ATPASE_ALPHA_BETA"/>
    <property type="match status" value="1"/>
</dbReference>
<name>ATPA_POLNS</name>
<proteinExistence type="inferred from homology"/>
<sequence>MQLNPSEISELIKSRISELGVDSQVRNEGTVISVTDGICRVHGLSGVMQGEMLEFPNNTIGLALNLERDSVGAVVLGEYTHIKEGDPVKCTGRILEVPVGPELLGRVVSVLGQPIDGKGPINTKLTDFIEKVAPGVIARQSVSQPVQTGLKAIDAMVPIGRGQRELIIGDRQTGKTAVAVDAIINQKGKGVYCVYVAIGQKASTIANVVRKLTENGAIDYTIVVAASASESAAMQYLSAYAGCTMGEYFRDRGEDALIVYDDLTKQAVAYRQISLLLRRPPGREAYPGDVFYLHSRLLERAARVNAEYVEKFTNGAVKGKTGSLTALPIIETQAGDVSAFVPTNVISITDGQIFLETDLFNAGVRPAINAGISVSRVGGTAQTKVIKKLSGGIRTDLAQYRELAAFAQFASDLDEATRKQLERGRRVTELCKQAQYKPLQVWEMAASLYAVNNGFFDDLEVKNVLAFEKGLQDHLKSKYADLVARIEATKDLSKDDEAALRAAVEDYKRSASF</sequence>
<organism>
    <name type="scientific">Polynucleobacter necessarius subsp. necessarius (strain STIR1)</name>
    <dbReference type="NCBI Taxonomy" id="452638"/>
    <lineage>
        <taxon>Bacteria</taxon>
        <taxon>Pseudomonadati</taxon>
        <taxon>Pseudomonadota</taxon>
        <taxon>Betaproteobacteria</taxon>
        <taxon>Burkholderiales</taxon>
        <taxon>Burkholderiaceae</taxon>
        <taxon>Polynucleobacter</taxon>
    </lineage>
</organism>
<gene>
    <name evidence="1" type="primary">atpA</name>
    <name type="ordered locus">Pnec_0020</name>
</gene>
<accession>B1XSD2</accession>
<reference key="1">
    <citation type="journal article" date="2013" name="Proc. Natl. Acad. Sci. U.S.A.">
        <title>Polynucleobacter necessarius, a model for genome reduction in both free-living and symbiotic bacteria.</title>
        <authorList>
            <person name="Boscaro V."/>
            <person name="Felletti M."/>
            <person name="Vannini C."/>
            <person name="Ackerman M.S."/>
            <person name="Chain P.S."/>
            <person name="Malfatti S."/>
            <person name="Vergez L.M."/>
            <person name="Shin M."/>
            <person name="Doak T.G."/>
            <person name="Lynch M."/>
            <person name="Petroni G."/>
        </authorList>
    </citation>
    <scope>NUCLEOTIDE SEQUENCE [LARGE SCALE GENOMIC DNA]</scope>
    <source>
        <strain>STIR1</strain>
    </source>
</reference>
<comment type="function">
    <text evidence="1">Produces ATP from ADP in the presence of a proton gradient across the membrane. The alpha chain is a regulatory subunit.</text>
</comment>
<comment type="catalytic activity">
    <reaction evidence="1">
        <text>ATP + H2O + 4 H(+)(in) = ADP + phosphate + 5 H(+)(out)</text>
        <dbReference type="Rhea" id="RHEA:57720"/>
        <dbReference type="ChEBI" id="CHEBI:15377"/>
        <dbReference type="ChEBI" id="CHEBI:15378"/>
        <dbReference type="ChEBI" id="CHEBI:30616"/>
        <dbReference type="ChEBI" id="CHEBI:43474"/>
        <dbReference type="ChEBI" id="CHEBI:456216"/>
        <dbReference type="EC" id="7.1.2.2"/>
    </reaction>
</comment>
<comment type="subunit">
    <text evidence="1">F-type ATPases have 2 components, CF(1) - the catalytic core - and CF(0) - the membrane proton channel. CF(1) has five subunits: alpha(3), beta(3), gamma(1), delta(1), epsilon(1). CF(0) has three main subunits: a(1), b(2) and c(9-12). The alpha and beta chains form an alternating ring which encloses part of the gamma chain. CF(1) is attached to CF(0) by a central stalk formed by the gamma and epsilon chains, while a peripheral stalk is formed by the delta and b chains.</text>
</comment>
<comment type="subcellular location">
    <subcellularLocation>
        <location evidence="1">Cell inner membrane</location>
        <topology evidence="1">Peripheral membrane protein</topology>
    </subcellularLocation>
</comment>
<comment type="similarity">
    <text evidence="1">Belongs to the ATPase alpha/beta chains family.</text>
</comment>
<keyword id="KW-0066">ATP synthesis</keyword>
<keyword id="KW-0067">ATP-binding</keyword>
<keyword id="KW-0997">Cell inner membrane</keyword>
<keyword id="KW-1003">Cell membrane</keyword>
<keyword id="KW-0139">CF(1)</keyword>
<keyword id="KW-0375">Hydrogen ion transport</keyword>
<keyword id="KW-0406">Ion transport</keyword>
<keyword id="KW-0472">Membrane</keyword>
<keyword id="KW-0547">Nucleotide-binding</keyword>
<keyword id="KW-1278">Translocase</keyword>
<keyword id="KW-0813">Transport</keyword>
<evidence type="ECO:0000255" key="1">
    <source>
        <dbReference type="HAMAP-Rule" id="MF_01346"/>
    </source>
</evidence>
<protein>
    <recommendedName>
        <fullName evidence="1">ATP synthase subunit alpha</fullName>
        <ecNumber evidence="1">7.1.2.2</ecNumber>
    </recommendedName>
    <alternativeName>
        <fullName evidence="1">ATP synthase F1 sector subunit alpha</fullName>
    </alternativeName>
    <alternativeName>
        <fullName evidence="1">F-ATPase subunit alpha</fullName>
    </alternativeName>
</protein>